<proteinExistence type="inferred from homology"/>
<reference key="1">
    <citation type="journal article" date="2004" name="Proc. Natl. Acad. Sci. U.S.A.">
        <title>The diploid genome sequence of Candida albicans.</title>
        <authorList>
            <person name="Jones T."/>
            <person name="Federspiel N.A."/>
            <person name="Chibana H."/>
            <person name="Dungan J."/>
            <person name="Kalman S."/>
            <person name="Magee B.B."/>
            <person name="Newport G."/>
            <person name="Thorstenson Y.R."/>
            <person name="Agabian N."/>
            <person name="Magee P.T."/>
            <person name="Davis R.W."/>
            <person name="Scherer S."/>
        </authorList>
    </citation>
    <scope>NUCLEOTIDE SEQUENCE [LARGE SCALE GENOMIC DNA]</scope>
    <source>
        <strain>SC5314 / ATCC MYA-2876</strain>
    </source>
</reference>
<reference key="2">
    <citation type="journal article" date="2007" name="Genome Biol.">
        <title>Assembly of the Candida albicans genome into sixteen supercontigs aligned on the eight chromosomes.</title>
        <authorList>
            <person name="van het Hoog M."/>
            <person name="Rast T.J."/>
            <person name="Martchenko M."/>
            <person name="Grindle S."/>
            <person name="Dignard D."/>
            <person name="Hogues H."/>
            <person name="Cuomo C."/>
            <person name="Berriman M."/>
            <person name="Scherer S."/>
            <person name="Magee B.B."/>
            <person name="Whiteway M."/>
            <person name="Chibana H."/>
            <person name="Nantel A."/>
            <person name="Magee P.T."/>
        </authorList>
    </citation>
    <scope>GENOME REANNOTATION</scope>
    <source>
        <strain>SC5314 / ATCC MYA-2876</strain>
    </source>
</reference>
<reference key="3">
    <citation type="journal article" date="2013" name="Genome Biol.">
        <title>Assembly of a phased diploid Candida albicans genome facilitates allele-specific measurements and provides a simple model for repeat and indel structure.</title>
        <authorList>
            <person name="Muzzey D."/>
            <person name="Schwartz K."/>
            <person name="Weissman J.S."/>
            <person name="Sherlock G."/>
        </authorList>
    </citation>
    <scope>NUCLEOTIDE SEQUENCE [LARGE SCALE GENOMIC DNA]</scope>
    <scope>GENOME REANNOTATION</scope>
    <source>
        <strain>SC5314 / ATCC MYA-2876</strain>
    </source>
</reference>
<name>ALG11_CANAL</name>
<feature type="chain" id="PRO_0000080273" description="GDP-Man:Man(3)GlcNAc(2)-PP-Dol alpha-1,2-mannosyltransferase">
    <location>
        <begin position="1"/>
        <end position="609"/>
    </location>
</feature>
<feature type="topological domain" description="Lumenal" evidence="1">
    <location>
        <position position="1"/>
    </location>
</feature>
<feature type="transmembrane region" description="Helical" evidence="2">
    <location>
        <begin position="2"/>
        <end position="22"/>
    </location>
</feature>
<feature type="topological domain" description="Cytoplasmic" evidence="1">
    <location>
        <begin position="23"/>
        <end position="195"/>
    </location>
</feature>
<feature type="intramembrane region" description="Helical" evidence="2">
    <location>
        <begin position="196"/>
        <end position="216"/>
    </location>
</feature>
<feature type="topological domain" description="Cytoplasmic" evidence="1">
    <location>
        <begin position="217"/>
        <end position="455"/>
    </location>
</feature>
<feature type="intramembrane region" description="Helical" evidence="2">
    <location>
        <begin position="456"/>
        <end position="476"/>
    </location>
</feature>
<feature type="topological domain" description="Cytoplasmic" evidence="1">
    <location>
        <begin position="477"/>
        <end position="609"/>
    </location>
</feature>
<accession>Q59S72</accession>
<accession>A0A1D8PPV0</accession>
<sequence>MYLILLVVLAVYVTYKLITTVLPHHLLIPSQNWREKISYVVKYPKPIYLKVGTKRSSYRRRLILASENPAFYTNFINNKLKISPNDCENGDGFLNEMSRRDIDDPKRRIIYGFFHPYANNGGGGERVLWQAVKATLLADDKNICVIYTTNIEAQPLDILNKANKKFQIDGLDHSRVVFIYLRKFNNLIDGNYWKHFTLIGQLFGGILLSLEAMYELSPDVWIDTMGLPSSYLLVSLSLKIPILAYTHFPILQEDMFGKLKFQKLKDLWKFNIIKFNDYFALGKFIYWSILYYFYVYLGSKVNIALANGSWTFNHLSKIWVFNTALGNVLDVLYPPCGTEFLIKQANLNQPRSNKLLYLAQFRPEKRHALLLKEYSNFLSNNFPNVTQITNKFPTLVFAGSCRTADDTATLKFLQEQVAKLDLSRFVEFRIDISYDEVVELLSSCKFGLNAMWNEHFGIGVVEYMARGCTPIVHASAGPLLDMIGRNDQQENCLNNWKTDGGFFFKSYDDPDLDPNLQKNTETGYIKFELFDQFIDYPTFETLLKELYVNDPTIIEDSKLLKMRQIDQNRVAEKFSNKAFNKKWIEYINDLNTLEKQYREEKRTKVEQVY</sequence>
<evidence type="ECO:0000250" key="1">
    <source>
        <dbReference type="UniProtKB" id="P53954"/>
    </source>
</evidence>
<evidence type="ECO:0000255" key="2"/>
<evidence type="ECO:0000305" key="3"/>
<organism>
    <name type="scientific">Candida albicans (strain SC5314 / ATCC MYA-2876)</name>
    <name type="common">Yeast</name>
    <dbReference type="NCBI Taxonomy" id="237561"/>
    <lineage>
        <taxon>Eukaryota</taxon>
        <taxon>Fungi</taxon>
        <taxon>Dikarya</taxon>
        <taxon>Ascomycota</taxon>
        <taxon>Saccharomycotina</taxon>
        <taxon>Pichiomycetes</taxon>
        <taxon>Debaryomycetaceae</taxon>
        <taxon>Candida/Lodderomyces clade</taxon>
        <taxon>Candida</taxon>
    </lineage>
</organism>
<dbReference type="EC" id="2.4.1.131" evidence="1"/>
<dbReference type="EMBL" id="CP017628">
    <property type="protein sequence ID" value="AOW30162.1"/>
    <property type="molecule type" value="Genomic_DNA"/>
</dbReference>
<dbReference type="RefSeq" id="XP_712508.2">
    <property type="nucleotide sequence ID" value="XM_707415.2"/>
</dbReference>
<dbReference type="FunCoup" id="Q59S72">
    <property type="interactions" value="428"/>
</dbReference>
<dbReference type="STRING" id="237561.Q59S72"/>
<dbReference type="GlyCosmos" id="Q59S72">
    <property type="glycosylation" value="2 sites, No reported glycans"/>
</dbReference>
<dbReference type="EnsemblFungi" id="C6_02270C_A-T">
    <property type="protein sequence ID" value="C6_02270C_A-T-p1"/>
    <property type="gene ID" value="C6_02270C_A"/>
</dbReference>
<dbReference type="GeneID" id="3645871"/>
<dbReference type="KEGG" id="cal:CAALFM_C602270CA"/>
<dbReference type="CGD" id="CAL0000201912">
    <property type="gene designation" value="ALG11"/>
</dbReference>
<dbReference type="VEuPathDB" id="FungiDB:C6_02270C_A"/>
<dbReference type="eggNOG" id="KOG1387">
    <property type="taxonomic scope" value="Eukaryota"/>
</dbReference>
<dbReference type="HOGENOM" id="CLU_017896_1_1_1"/>
<dbReference type="InParanoid" id="Q59S72"/>
<dbReference type="OrthoDB" id="2276068at2759"/>
<dbReference type="UniPathway" id="UPA00378"/>
<dbReference type="PRO" id="PR:Q59S72"/>
<dbReference type="Proteomes" id="UP000000559">
    <property type="component" value="Chromosome 6"/>
</dbReference>
<dbReference type="GO" id="GO:0005789">
    <property type="term" value="C:endoplasmic reticulum membrane"/>
    <property type="evidence" value="ECO:0000318"/>
    <property type="project" value="GO_Central"/>
</dbReference>
<dbReference type="GO" id="GO:0004377">
    <property type="term" value="F:GDP-Man:Man3GlcNAc2-PP-Dol alpha-1,2-mannosyltransferase activity"/>
    <property type="evidence" value="ECO:0000318"/>
    <property type="project" value="GO_Central"/>
</dbReference>
<dbReference type="GO" id="GO:0006488">
    <property type="term" value="P:dolichol-linked oligosaccharide biosynthetic process"/>
    <property type="evidence" value="ECO:0000318"/>
    <property type="project" value="GO_Central"/>
</dbReference>
<dbReference type="CDD" id="cd03806">
    <property type="entry name" value="GT4_ALG11-like"/>
    <property type="match status" value="1"/>
</dbReference>
<dbReference type="FunFam" id="3.40.50.2000:FF:000256">
    <property type="entry name" value="GDP-Man:Man(3)GlcNAc(2)-PP-Dol alpha-1,2-mannosyltransferase"/>
    <property type="match status" value="1"/>
</dbReference>
<dbReference type="Gene3D" id="3.40.50.2000">
    <property type="entry name" value="Glycogen Phosphorylase B"/>
    <property type="match status" value="1"/>
</dbReference>
<dbReference type="InterPro" id="IPR038013">
    <property type="entry name" value="ALG11"/>
</dbReference>
<dbReference type="InterPro" id="IPR031814">
    <property type="entry name" value="ALG11_N"/>
</dbReference>
<dbReference type="InterPro" id="IPR001296">
    <property type="entry name" value="Glyco_trans_1"/>
</dbReference>
<dbReference type="PANTHER" id="PTHR45919">
    <property type="entry name" value="GDP-MAN:MAN(3)GLCNAC(2)-PP-DOL ALPHA-1,2-MANNOSYLTRANSFERASE"/>
    <property type="match status" value="1"/>
</dbReference>
<dbReference type="PANTHER" id="PTHR45919:SF1">
    <property type="entry name" value="GDP-MAN:MAN(3)GLCNAC(2)-PP-DOL ALPHA-1,2-MANNOSYLTRANSFERASE"/>
    <property type="match status" value="1"/>
</dbReference>
<dbReference type="Pfam" id="PF15924">
    <property type="entry name" value="ALG11_N"/>
    <property type="match status" value="1"/>
</dbReference>
<dbReference type="Pfam" id="PF00534">
    <property type="entry name" value="Glycos_transf_1"/>
    <property type="match status" value="1"/>
</dbReference>
<dbReference type="SUPFAM" id="SSF53756">
    <property type="entry name" value="UDP-Glycosyltransferase/glycogen phosphorylase"/>
    <property type="match status" value="1"/>
</dbReference>
<keyword id="KW-0256">Endoplasmic reticulum</keyword>
<keyword id="KW-0328">Glycosyltransferase</keyword>
<keyword id="KW-0472">Membrane</keyword>
<keyword id="KW-1185">Reference proteome</keyword>
<keyword id="KW-0808">Transferase</keyword>
<keyword id="KW-0812">Transmembrane</keyword>
<keyword id="KW-1133">Transmembrane helix</keyword>
<protein>
    <recommendedName>
        <fullName evidence="1">GDP-Man:Man(3)GlcNAc(2)-PP-Dol alpha-1,2-mannosyltransferase</fullName>
        <ecNumber evidence="1">2.4.1.131</ecNumber>
    </recommendedName>
    <alternativeName>
        <fullName>Alpha-1,2-mannosyltransferase ALG11</fullName>
    </alternativeName>
    <alternativeName>
        <fullName>Asparagine-linked glycosylation protein 11</fullName>
    </alternativeName>
    <alternativeName>
        <fullName>Glycolipid 2-alpha-mannosyltransferase</fullName>
    </alternativeName>
</protein>
<comment type="function">
    <text evidence="1">GDP-Man:Man(3)GlcNAc(2)-PP-Dol alpha-1,2-mannosyltransferase that operates in the biosynthetic pathway of dolichol-linked oligosaccharides, the glycan precursors employed in protein asparagine (N)-glycosylation. The assembly of dolichol-linked oligosaccharides begins on the cytosolic side of the endoplasmic reticulum membrane and finishes in its lumen. The sequential addition of sugars to dolichol pyrophosphate produces dolichol-linked oligosaccharides containing fourteen sugars, including two GlcNAcs, nine mannoses and three glucoses. Once assembled, the oligosaccharide is transferred from the lipid to nascent proteins by oligosaccharyltransferases. Catalyzes, on the cytoplasmic face of the endoplasmic reticulum, the addition of the fourth and fifth mannose residues to the dolichol-linked oligosaccharide chain, to produce Man(5)GlcNAc(2)-PP-dolichol core oligosaccharide.</text>
</comment>
<comment type="catalytic activity">
    <reaction evidence="1">
        <text>an alpha-D-Man-(1-&gt;3)-[alpha-D-Man-(1-&gt;6)]-beta-D-Man-(1-&gt;4)-beta-D-GlcNAc-(1-&gt;4)-alpha-D-GlcNAc-diphospho-di-trans,poly-cis-dolichol + 2 GDP-alpha-D-mannose = an alpha-D-Man-(1-&gt;2)-alpha-D-Man-(1-&gt;2)-alpha-D-Man-(1-&gt;3)-[alpha-D-Man-(1-&gt;6)]-beta-D-Man-(1-&gt;4)-beta-D-GlcNAc-(1-&gt;4)-alpha-D-GlcNAc-diphospho-di-trans,poly-cis-dolichol + 2 GDP + 2 H(+)</text>
        <dbReference type="Rhea" id="RHEA:29523"/>
        <dbReference type="Rhea" id="RHEA-COMP:19515"/>
        <dbReference type="Rhea" id="RHEA-COMP:19516"/>
        <dbReference type="ChEBI" id="CHEBI:15378"/>
        <dbReference type="ChEBI" id="CHEBI:57527"/>
        <dbReference type="ChEBI" id="CHEBI:58189"/>
        <dbReference type="ChEBI" id="CHEBI:132511"/>
        <dbReference type="ChEBI" id="CHEBI:132515"/>
        <dbReference type="EC" id="2.4.1.131"/>
    </reaction>
    <physiologicalReaction direction="left-to-right" evidence="1">
        <dbReference type="Rhea" id="RHEA:29524"/>
    </physiologicalReaction>
</comment>
<comment type="pathway">
    <text evidence="1">Protein modification; protein glycosylation.</text>
</comment>
<comment type="subcellular location">
    <subcellularLocation>
        <location evidence="1">Endoplasmic reticulum membrane</location>
        <topology evidence="1">Single-pass membrane protein</topology>
    </subcellularLocation>
</comment>
<comment type="similarity">
    <text evidence="3">Belongs to the glycosyltransferase group 1 family.</text>
</comment>
<gene>
    <name type="primary">ALG11</name>
    <name type="ordered locus">CAALFM_C602270CA</name>
    <name type="ORF">CaO19.10972</name>
    <name type="ORF">CaO19.3468</name>
</gene>